<dbReference type="EC" id="2.5.1.7" evidence="1"/>
<dbReference type="EMBL" id="CP001055">
    <property type="protein sequence ID" value="ACC98645.1"/>
    <property type="molecule type" value="Genomic_DNA"/>
</dbReference>
<dbReference type="RefSeq" id="WP_012415260.1">
    <property type="nucleotide sequence ID" value="NC_010644.1"/>
</dbReference>
<dbReference type="SMR" id="B2KDP9"/>
<dbReference type="STRING" id="445932.Emin_1093"/>
<dbReference type="KEGG" id="emi:Emin_1093"/>
<dbReference type="HOGENOM" id="CLU_027387_0_0_0"/>
<dbReference type="OrthoDB" id="9803760at2"/>
<dbReference type="UniPathway" id="UPA00219"/>
<dbReference type="Proteomes" id="UP000001029">
    <property type="component" value="Chromosome"/>
</dbReference>
<dbReference type="GO" id="GO:0005737">
    <property type="term" value="C:cytoplasm"/>
    <property type="evidence" value="ECO:0007669"/>
    <property type="project" value="UniProtKB-SubCell"/>
</dbReference>
<dbReference type="GO" id="GO:0008760">
    <property type="term" value="F:UDP-N-acetylglucosamine 1-carboxyvinyltransferase activity"/>
    <property type="evidence" value="ECO:0007669"/>
    <property type="project" value="UniProtKB-UniRule"/>
</dbReference>
<dbReference type="GO" id="GO:0051301">
    <property type="term" value="P:cell division"/>
    <property type="evidence" value="ECO:0007669"/>
    <property type="project" value="UniProtKB-KW"/>
</dbReference>
<dbReference type="GO" id="GO:0071555">
    <property type="term" value="P:cell wall organization"/>
    <property type="evidence" value="ECO:0007669"/>
    <property type="project" value="UniProtKB-KW"/>
</dbReference>
<dbReference type="GO" id="GO:0009252">
    <property type="term" value="P:peptidoglycan biosynthetic process"/>
    <property type="evidence" value="ECO:0007669"/>
    <property type="project" value="UniProtKB-UniRule"/>
</dbReference>
<dbReference type="GO" id="GO:0008360">
    <property type="term" value="P:regulation of cell shape"/>
    <property type="evidence" value="ECO:0007669"/>
    <property type="project" value="UniProtKB-KW"/>
</dbReference>
<dbReference type="GO" id="GO:0019277">
    <property type="term" value="P:UDP-N-acetylgalactosamine biosynthetic process"/>
    <property type="evidence" value="ECO:0007669"/>
    <property type="project" value="InterPro"/>
</dbReference>
<dbReference type="CDD" id="cd01555">
    <property type="entry name" value="UdpNAET"/>
    <property type="match status" value="1"/>
</dbReference>
<dbReference type="Gene3D" id="3.65.10.10">
    <property type="entry name" value="Enolpyruvate transferase domain"/>
    <property type="match status" value="2"/>
</dbReference>
<dbReference type="HAMAP" id="MF_00111">
    <property type="entry name" value="MurA"/>
    <property type="match status" value="1"/>
</dbReference>
<dbReference type="InterPro" id="IPR001986">
    <property type="entry name" value="Enolpyruvate_Tfrase_dom"/>
</dbReference>
<dbReference type="InterPro" id="IPR036968">
    <property type="entry name" value="Enolpyruvate_Tfrase_sf"/>
</dbReference>
<dbReference type="InterPro" id="IPR050068">
    <property type="entry name" value="MurA_subfamily"/>
</dbReference>
<dbReference type="InterPro" id="IPR013792">
    <property type="entry name" value="RNA3'P_cycl/enolpyr_Trfase_a/b"/>
</dbReference>
<dbReference type="InterPro" id="IPR005750">
    <property type="entry name" value="UDP_GlcNAc_COvinyl_MurA"/>
</dbReference>
<dbReference type="NCBIfam" id="TIGR01072">
    <property type="entry name" value="murA"/>
    <property type="match status" value="1"/>
</dbReference>
<dbReference type="NCBIfam" id="NF006873">
    <property type="entry name" value="PRK09369.1"/>
    <property type="match status" value="1"/>
</dbReference>
<dbReference type="PANTHER" id="PTHR43783">
    <property type="entry name" value="UDP-N-ACETYLGLUCOSAMINE 1-CARBOXYVINYLTRANSFERASE"/>
    <property type="match status" value="1"/>
</dbReference>
<dbReference type="PANTHER" id="PTHR43783:SF1">
    <property type="entry name" value="UDP-N-ACETYLGLUCOSAMINE 1-CARBOXYVINYLTRANSFERASE"/>
    <property type="match status" value="1"/>
</dbReference>
<dbReference type="Pfam" id="PF00275">
    <property type="entry name" value="EPSP_synthase"/>
    <property type="match status" value="1"/>
</dbReference>
<dbReference type="SUPFAM" id="SSF55205">
    <property type="entry name" value="EPT/RTPC-like"/>
    <property type="match status" value="1"/>
</dbReference>
<proteinExistence type="inferred from homology"/>
<accession>B2KDP9</accession>
<protein>
    <recommendedName>
        <fullName evidence="1">UDP-N-acetylglucosamine 1-carboxyvinyltransferase</fullName>
        <ecNumber evidence="1">2.5.1.7</ecNumber>
    </recommendedName>
    <alternativeName>
        <fullName evidence="1">Enoylpyruvate transferase</fullName>
    </alternativeName>
    <alternativeName>
        <fullName evidence="1">UDP-N-acetylglucosamine enolpyruvyl transferase</fullName>
        <shortName evidence="1">EPT</shortName>
    </alternativeName>
</protein>
<gene>
    <name evidence="1" type="primary">murA</name>
    <name type="ordered locus">Emin_1093</name>
</gene>
<keyword id="KW-0131">Cell cycle</keyword>
<keyword id="KW-0132">Cell division</keyword>
<keyword id="KW-0133">Cell shape</keyword>
<keyword id="KW-0961">Cell wall biogenesis/degradation</keyword>
<keyword id="KW-0963">Cytoplasm</keyword>
<keyword id="KW-0573">Peptidoglycan synthesis</keyword>
<keyword id="KW-0670">Pyruvate</keyword>
<keyword id="KW-1185">Reference proteome</keyword>
<keyword id="KW-0808">Transferase</keyword>
<comment type="function">
    <text evidence="1">Cell wall formation. Adds enolpyruvyl to UDP-N-acetylglucosamine.</text>
</comment>
<comment type="catalytic activity">
    <reaction evidence="1">
        <text>phosphoenolpyruvate + UDP-N-acetyl-alpha-D-glucosamine = UDP-N-acetyl-3-O-(1-carboxyvinyl)-alpha-D-glucosamine + phosphate</text>
        <dbReference type="Rhea" id="RHEA:18681"/>
        <dbReference type="ChEBI" id="CHEBI:43474"/>
        <dbReference type="ChEBI" id="CHEBI:57705"/>
        <dbReference type="ChEBI" id="CHEBI:58702"/>
        <dbReference type="ChEBI" id="CHEBI:68483"/>
        <dbReference type="EC" id="2.5.1.7"/>
    </reaction>
</comment>
<comment type="pathway">
    <text evidence="1">Cell wall biogenesis; peptidoglycan biosynthesis.</text>
</comment>
<comment type="subcellular location">
    <subcellularLocation>
        <location evidence="1">Cytoplasm</location>
    </subcellularLocation>
</comment>
<comment type="similarity">
    <text evidence="1">Belongs to the EPSP synthase family. MurA subfamily.</text>
</comment>
<feature type="chain" id="PRO_1000094690" description="UDP-N-acetylglucosamine 1-carboxyvinyltransferase">
    <location>
        <begin position="1"/>
        <end position="422"/>
    </location>
</feature>
<feature type="active site" description="Proton donor" evidence="1">
    <location>
        <position position="116"/>
    </location>
</feature>
<feature type="binding site" evidence="1">
    <location>
        <begin position="22"/>
        <end position="23"/>
    </location>
    <ligand>
        <name>phosphoenolpyruvate</name>
        <dbReference type="ChEBI" id="CHEBI:58702"/>
    </ligand>
</feature>
<feature type="binding site" evidence="1">
    <location>
        <position position="92"/>
    </location>
    <ligand>
        <name>UDP-N-acetyl-alpha-D-glucosamine</name>
        <dbReference type="ChEBI" id="CHEBI:57705"/>
    </ligand>
</feature>
<feature type="binding site" evidence="1">
    <location>
        <position position="306"/>
    </location>
    <ligand>
        <name>UDP-N-acetyl-alpha-D-glucosamine</name>
        <dbReference type="ChEBI" id="CHEBI:57705"/>
    </ligand>
</feature>
<feature type="binding site" evidence="1">
    <location>
        <position position="328"/>
    </location>
    <ligand>
        <name>UDP-N-acetyl-alpha-D-glucosamine</name>
        <dbReference type="ChEBI" id="CHEBI:57705"/>
    </ligand>
</feature>
<feature type="modified residue" description="2-(S-cysteinyl)pyruvic acid O-phosphothioketal" evidence="1">
    <location>
        <position position="116"/>
    </location>
</feature>
<reference key="1">
    <citation type="journal article" date="2009" name="Appl. Environ. Microbiol.">
        <title>Genomic analysis of 'Elusimicrobium minutum,' the first cultivated representative of the phylum 'Elusimicrobia' (formerly termite group 1).</title>
        <authorList>
            <person name="Herlemann D.P.R."/>
            <person name="Geissinger O."/>
            <person name="Ikeda-Ohtsubo W."/>
            <person name="Kunin V."/>
            <person name="Sun H."/>
            <person name="Lapidus A."/>
            <person name="Hugenholtz P."/>
            <person name="Brune A."/>
        </authorList>
    </citation>
    <scope>NUCLEOTIDE SEQUENCE [LARGE SCALE GENOMIC DNA]</scope>
    <source>
        <strain>Pei191</strain>
    </source>
</reference>
<evidence type="ECO:0000255" key="1">
    <source>
        <dbReference type="HAMAP-Rule" id="MF_00111"/>
    </source>
</evidence>
<sequence>MDRFTIKGPVKLQGEVEISGSKNAALPILMATLLTDEKCVLNRVPNLRDIRTTFKLLEVLGKKVEYNNGTAVITKNKELNSILPYELVKQMRASFWVAGPLLARLKHTQIPLPGGCAIGVRPVDIHLQGFKKFGAAESTKKGDVVISADELKPAKIVLRFPSVGATINIMMCASLIPGKTIIENAAKEPEVEDLICALKTMGAQISIDSKGRIIVEGKKTLGSMTHTVVADRIETGTFILAAAATKGDVVIKNCVPEHNDILLENLKDAGFGVSVGQGRIHITAPSNGKIKPVGIRTMPYPGFATDLQAPYMVLLCVADGGSDITEDIFENRYMHAPELVRMGADITIEKTMAKVKGVKELSGANVMASDLRGGAALVIAALCAAGDTVIDRVYHIDRGYENIEAKFAALGAKIVRDNPLKD</sequence>
<name>MURA_ELUMP</name>
<organism>
    <name type="scientific">Elusimicrobium minutum (strain Pei191)</name>
    <dbReference type="NCBI Taxonomy" id="445932"/>
    <lineage>
        <taxon>Bacteria</taxon>
        <taxon>Pseudomonadati</taxon>
        <taxon>Elusimicrobiota</taxon>
        <taxon>Elusimicrobia</taxon>
        <taxon>Elusimicrobiales</taxon>
        <taxon>Elusimicrobiaceae</taxon>
        <taxon>Elusimicrobium</taxon>
    </lineage>
</organism>